<protein>
    <recommendedName>
        <fullName evidence="1">Large ribosomal subunit protein uL11</fullName>
    </recommendedName>
    <alternativeName>
        <fullName evidence="2">50S ribosomal protein L11</fullName>
    </alternativeName>
</protein>
<name>RL11_NOVAD</name>
<gene>
    <name evidence="1" type="primary">rplK</name>
    <name type="ordered locus">Saro_0833</name>
</gene>
<comment type="function">
    <text evidence="1">Forms part of the ribosomal stalk which helps the ribosome interact with GTP-bound translation factors.</text>
</comment>
<comment type="subunit">
    <text evidence="1">Part of the ribosomal stalk of the 50S ribosomal subunit. Interacts with L10 and the large rRNA to form the base of the stalk. L10 forms an elongated spine to which L12 dimers bind in a sequential fashion forming a multimeric L10(L12)X complex.</text>
</comment>
<comment type="PTM">
    <text evidence="1">One or more lysine residues are methylated.</text>
</comment>
<comment type="similarity">
    <text evidence="1">Belongs to the universal ribosomal protein uL11 family.</text>
</comment>
<feature type="chain" id="PRO_0000258179" description="Large ribosomal subunit protein uL11">
    <location>
        <begin position="1"/>
        <end position="143"/>
    </location>
</feature>
<reference key="1">
    <citation type="submission" date="2006-01" db="EMBL/GenBank/DDBJ databases">
        <title>Complete sequence of Novosphingobium aromaticivorans DSM 12444.</title>
        <authorList>
            <consortium name="US DOE Joint Genome Institute"/>
            <person name="Copeland A."/>
            <person name="Lucas S."/>
            <person name="Lapidus A."/>
            <person name="Barry K."/>
            <person name="Detter J.C."/>
            <person name="Glavina T."/>
            <person name="Hammon N."/>
            <person name="Israni S."/>
            <person name="Pitluck S."/>
            <person name="Chain P."/>
            <person name="Malfatti S."/>
            <person name="Shin M."/>
            <person name="Vergez L."/>
            <person name="Schmutz J."/>
            <person name="Larimer F."/>
            <person name="Land M."/>
            <person name="Kyrpides N."/>
            <person name="Ivanova N."/>
            <person name="Fredrickson J."/>
            <person name="Balkwill D."/>
            <person name="Romine M.F."/>
            <person name="Richardson P."/>
        </authorList>
    </citation>
    <scope>NUCLEOTIDE SEQUENCE [LARGE SCALE GENOMIC DNA]</scope>
    <source>
        <strain>ATCC 700278 / DSM 12444 / CCUG 56034 / CIP 105152 / NBRC 16084 / F199</strain>
    </source>
</reference>
<organism>
    <name type="scientific">Novosphingobium aromaticivorans (strain ATCC 700278 / DSM 12444 / CCUG 56034 / CIP 105152 / NBRC 16084 / F199)</name>
    <dbReference type="NCBI Taxonomy" id="279238"/>
    <lineage>
        <taxon>Bacteria</taxon>
        <taxon>Pseudomonadati</taxon>
        <taxon>Pseudomonadota</taxon>
        <taxon>Alphaproteobacteria</taxon>
        <taxon>Sphingomonadales</taxon>
        <taxon>Sphingomonadaceae</taxon>
        <taxon>Novosphingobium</taxon>
    </lineage>
</organism>
<proteinExistence type="inferred from homology"/>
<sequence length="143" mass="15023">MAKKIEGYIKLQVAAGDAKPAPPIGPALGQRGVNIMEFCKQFNAATQEIEKGTPLPTVITVYADRSFTFVTKTPPATFFIKKAVGIKSGSKTPGKASAGTIKRSQLAEIAQAKMKDLNANDIDAATKIIEGSARAMGLTVVEG</sequence>
<dbReference type="EMBL" id="CP000248">
    <property type="protein sequence ID" value="ABD25278.1"/>
    <property type="molecule type" value="Genomic_DNA"/>
</dbReference>
<dbReference type="RefSeq" id="WP_011444492.1">
    <property type="nucleotide sequence ID" value="NC_007794.1"/>
</dbReference>
<dbReference type="SMR" id="Q2GA45"/>
<dbReference type="STRING" id="279238.Saro_0833"/>
<dbReference type="KEGG" id="nar:Saro_0833"/>
<dbReference type="eggNOG" id="COG0080">
    <property type="taxonomic scope" value="Bacteria"/>
</dbReference>
<dbReference type="HOGENOM" id="CLU_074237_2_0_5"/>
<dbReference type="Proteomes" id="UP000009134">
    <property type="component" value="Chromosome"/>
</dbReference>
<dbReference type="GO" id="GO:0022625">
    <property type="term" value="C:cytosolic large ribosomal subunit"/>
    <property type="evidence" value="ECO:0007669"/>
    <property type="project" value="TreeGrafter"/>
</dbReference>
<dbReference type="GO" id="GO:0070180">
    <property type="term" value="F:large ribosomal subunit rRNA binding"/>
    <property type="evidence" value="ECO:0007669"/>
    <property type="project" value="UniProtKB-UniRule"/>
</dbReference>
<dbReference type="GO" id="GO:0003735">
    <property type="term" value="F:structural constituent of ribosome"/>
    <property type="evidence" value="ECO:0007669"/>
    <property type="project" value="InterPro"/>
</dbReference>
<dbReference type="GO" id="GO:0006412">
    <property type="term" value="P:translation"/>
    <property type="evidence" value="ECO:0007669"/>
    <property type="project" value="UniProtKB-UniRule"/>
</dbReference>
<dbReference type="CDD" id="cd00349">
    <property type="entry name" value="Ribosomal_L11"/>
    <property type="match status" value="1"/>
</dbReference>
<dbReference type="FunFam" id="1.10.10.250:FF:000001">
    <property type="entry name" value="50S ribosomal protein L11"/>
    <property type="match status" value="1"/>
</dbReference>
<dbReference type="FunFam" id="3.30.1550.10:FF:000001">
    <property type="entry name" value="50S ribosomal protein L11"/>
    <property type="match status" value="1"/>
</dbReference>
<dbReference type="Gene3D" id="1.10.10.250">
    <property type="entry name" value="Ribosomal protein L11, C-terminal domain"/>
    <property type="match status" value="1"/>
</dbReference>
<dbReference type="Gene3D" id="3.30.1550.10">
    <property type="entry name" value="Ribosomal protein L11/L12, N-terminal domain"/>
    <property type="match status" value="1"/>
</dbReference>
<dbReference type="HAMAP" id="MF_00736">
    <property type="entry name" value="Ribosomal_uL11"/>
    <property type="match status" value="1"/>
</dbReference>
<dbReference type="InterPro" id="IPR000911">
    <property type="entry name" value="Ribosomal_uL11"/>
</dbReference>
<dbReference type="InterPro" id="IPR006519">
    <property type="entry name" value="Ribosomal_uL11_bac-typ"/>
</dbReference>
<dbReference type="InterPro" id="IPR020783">
    <property type="entry name" value="Ribosomal_uL11_C"/>
</dbReference>
<dbReference type="InterPro" id="IPR036769">
    <property type="entry name" value="Ribosomal_uL11_C_sf"/>
</dbReference>
<dbReference type="InterPro" id="IPR020784">
    <property type="entry name" value="Ribosomal_uL11_N"/>
</dbReference>
<dbReference type="InterPro" id="IPR036796">
    <property type="entry name" value="Ribosomal_uL11_N_sf"/>
</dbReference>
<dbReference type="NCBIfam" id="TIGR01632">
    <property type="entry name" value="L11_bact"/>
    <property type="match status" value="1"/>
</dbReference>
<dbReference type="PANTHER" id="PTHR11661">
    <property type="entry name" value="60S RIBOSOMAL PROTEIN L12"/>
    <property type="match status" value="1"/>
</dbReference>
<dbReference type="PANTHER" id="PTHR11661:SF1">
    <property type="entry name" value="LARGE RIBOSOMAL SUBUNIT PROTEIN UL11M"/>
    <property type="match status" value="1"/>
</dbReference>
<dbReference type="Pfam" id="PF00298">
    <property type="entry name" value="Ribosomal_L11"/>
    <property type="match status" value="1"/>
</dbReference>
<dbReference type="Pfam" id="PF03946">
    <property type="entry name" value="Ribosomal_L11_N"/>
    <property type="match status" value="1"/>
</dbReference>
<dbReference type="SMART" id="SM00649">
    <property type="entry name" value="RL11"/>
    <property type="match status" value="1"/>
</dbReference>
<dbReference type="SUPFAM" id="SSF54747">
    <property type="entry name" value="Ribosomal L11/L12e N-terminal domain"/>
    <property type="match status" value="1"/>
</dbReference>
<dbReference type="SUPFAM" id="SSF46906">
    <property type="entry name" value="Ribosomal protein L11, C-terminal domain"/>
    <property type="match status" value="1"/>
</dbReference>
<keyword id="KW-0488">Methylation</keyword>
<keyword id="KW-1185">Reference proteome</keyword>
<keyword id="KW-0687">Ribonucleoprotein</keyword>
<keyword id="KW-0689">Ribosomal protein</keyword>
<keyword id="KW-0694">RNA-binding</keyword>
<keyword id="KW-0699">rRNA-binding</keyword>
<accession>Q2GA45</accession>
<evidence type="ECO:0000255" key="1">
    <source>
        <dbReference type="HAMAP-Rule" id="MF_00736"/>
    </source>
</evidence>
<evidence type="ECO:0000305" key="2"/>